<evidence type="ECO:0000250" key="1"/>
<evidence type="ECO:0000255" key="2"/>
<evidence type="ECO:0000256" key="3">
    <source>
        <dbReference type="SAM" id="MobiDB-lite"/>
    </source>
</evidence>
<evidence type="ECO:0000305" key="4"/>
<sequence>MFWWNILIWLGLWNFLPVLAQDFKPKVSFHSDVDTHGRLSILGFDDSRVVLKLLRGVELYRSEDNGVTWDSVGLPLSSDNKPQEWNHLVLDRIYKADVAYLSGENGVLATGDKGKSWKQLTFLDADNHKIDFSDYSNVGDENRKPIINVEIESHPTNKNARIINIYELGKLDGKFTLRQISFYSKDGNNFKLASSGSKSNDDSNPLNMFCSFVQKSSKSKLYKLKDKVICQESTVLSPFGDVSSKLYITDVNFKSLSPFAEQLQDLSPASTFISDNHLFILTLSDRFNENSAANLWRLEDDSTDKFEQISLGTQIRKSLMDVNEIDGRAIITIYHRERNKDGDNNDDEDKSPFEDIFSGSIEALISDSYGKNFRHLSFDEQKASSLTLSTSIFVKKTMFATWTNTMRDFGFFDFRSKVSFDLGNTWSKLKVSDPEGKWNYNCDINSDSNDCGFQMFIVYGGGVEGDSDIFSPGIIAAIGDVYEENPSGDFLKMGTFISRDDGSTWEKVLDFPSRVVMGDYGNIILAVPFDPESDKDPQSEFYFSLDQGKTFQEYQLDKSFYPTELLPSALDGSGNSFMLVGTIMSEDYQNLESVSYVVDFSDAFKGASCKTSDMEDWYYSNGQCVDGTILKFRRRKQDAQCLIKTTYKDLTFEEELCGCSELDYECADDFSIDSAGKCVPDFSKASLMEKCESKKSIQLEPKKISKTTKCKRPQNIIKEEISCAAVPAPSNVKVTENKFSSIFKSYQYFDTFVRESILFRTDKSEAYVSHDGGQNIKQIQTGGEDILEINFNPFFNSSAYLFGKNKNLFATHDYGLSFKVTELPAGRQLGFPLSFHAKDIQTFIYYGGESCESFFDPNCHAVAYITRDGGASFEKLLEGASNCEFLESAVESPRVENGIVCMVKDKSTGARSYVSSTDYFKTQTVLYSDILGFMSTGGYIVVAVSHGERQLRAYLTIDGVEYSEAVLPADLDSYEQKAFTVLGSQEGAIFMHMTTNLDKNEEFGALLKSNTEGTSFVILERAVNRNSFGFVDFEKIQGLEGIILINTVANAKEIVESKDKTSQKKLKTKITFNDGADWTYIKPPSVDSEGKKYNCNPKNLEKCSLNLHGFTERKDVRDTYSSGSAIGYMFALGNVGEYLTPVSEASTFMTNDGGISWSEVKKGSYQWEYGDHGSVLVLVKDNEPTDTVSYSINGGKTWKDYQFASEKINVYDLVTVPRDSAMRFLVIGSSVNVRGEETRTYTLDFVDMFSRQCQYSKDDLKDFEYISLSHPNTKECLFGHKAKYLRKKSDDCYVGMAPLEDKFRIFANCSCTRNDYECDYNFMRVSDGTCKLIDGLKPADPKDICSKDNSLIEYFEPTGYRKIALSTCNGGLMLANSDSPHPCPGKEKEFKEKYKVNHTSFLAIWIFAVLIFTGMLSFIYYRGIKRNGGFARFGEIRLGDDDLIEENNTDRAVNTVLRNGVFLFSNVYTGLQYFGHQVGNFFKRGLSRFGNTTGPSYQSLLHDQFLDDADDLLVGHDEDADDLASFIENEGNFEIGNDEEVDLSSDTPTHAPYSDNPEEANPHEST</sequence>
<gene>
    <name type="primary">VPS10</name>
    <name type="ordered locus">KLLA0E10517g</name>
</gene>
<feature type="signal peptide" evidence="2">
    <location>
        <begin position="1"/>
        <end position="20"/>
    </location>
</feature>
<feature type="chain" id="PRO_0000407519" description="Vacuolar protein sorting/targeting protein 10">
    <location>
        <begin position="21"/>
        <end position="1566"/>
    </location>
</feature>
<feature type="topological domain" description="Lumenal" evidence="2">
    <location>
        <begin position="21"/>
        <end position="1400"/>
    </location>
</feature>
<feature type="transmembrane region" description="Helical" evidence="2">
    <location>
        <begin position="1401"/>
        <end position="1421"/>
    </location>
</feature>
<feature type="topological domain" description="Cytoplasmic" evidence="2">
    <location>
        <begin position="1422"/>
        <end position="1566"/>
    </location>
</feature>
<feature type="repeat" description="BNR 1">
    <location>
        <begin position="60"/>
        <end position="70"/>
    </location>
</feature>
<feature type="repeat" description="BNR 2">
    <location>
        <begin position="418"/>
        <end position="428"/>
    </location>
</feature>
<feature type="repeat" description="BNR 3">
    <location>
        <begin position="496"/>
        <end position="507"/>
    </location>
</feature>
<feature type="repeat" description="BNR 4">
    <location>
        <begin position="542"/>
        <end position="552"/>
    </location>
</feature>
<feature type="repeat" description="BNR 5">
    <location>
        <begin position="767"/>
        <end position="776"/>
    </location>
</feature>
<feature type="repeat" description="BNR 6">
    <location>
        <begin position="864"/>
        <end position="875"/>
    </location>
</feature>
<feature type="repeat" description="BNR 7">
    <location>
        <begin position="1148"/>
        <end position="1158"/>
    </location>
</feature>
<feature type="repeat" description="BNR 8">
    <location>
        <begin position="1190"/>
        <end position="1199"/>
    </location>
</feature>
<feature type="region of interest" description="Disordered" evidence="3">
    <location>
        <begin position="1534"/>
        <end position="1566"/>
    </location>
</feature>
<feature type="glycosylation site" description="N-linked (GlcNAc...) asparagine" evidence="2">
    <location>
        <position position="796"/>
    </location>
</feature>
<feature type="glycosylation site" description="N-linked (GlcNAc...) asparagine" evidence="2">
    <location>
        <position position="1308"/>
    </location>
</feature>
<feature type="glycosylation site" description="N-linked (GlcNAc...) asparagine" evidence="2">
    <location>
        <position position="1397"/>
    </location>
</feature>
<proteinExistence type="inferred from homology"/>
<dbReference type="EMBL" id="CR382125">
    <property type="protein sequence ID" value="CAG99512.1"/>
    <property type="molecule type" value="Genomic_DNA"/>
</dbReference>
<dbReference type="RefSeq" id="XP_454425.1">
    <property type="nucleotide sequence ID" value="XM_454425.1"/>
</dbReference>
<dbReference type="SMR" id="Q6CNR4"/>
<dbReference type="FunCoup" id="Q6CNR4">
    <property type="interactions" value="242"/>
</dbReference>
<dbReference type="STRING" id="284590.Q6CNR4"/>
<dbReference type="GlyCosmos" id="Q6CNR4">
    <property type="glycosylation" value="3 sites, No reported glycans"/>
</dbReference>
<dbReference type="PaxDb" id="284590-Q6CNR4"/>
<dbReference type="KEGG" id="kla:KLLA0_E10517g"/>
<dbReference type="eggNOG" id="KOG3511">
    <property type="taxonomic scope" value="Eukaryota"/>
</dbReference>
<dbReference type="HOGENOM" id="CLU_000700_0_0_1"/>
<dbReference type="InParanoid" id="Q6CNR4"/>
<dbReference type="OMA" id="ECDYNYY"/>
<dbReference type="Proteomes" id="UP000000598">
    <property type="component" value="Chromosome E"/>
</dbReference>
<dbReference type="GO" id="GO:0005829">
    <property type="term" value="C:cytosol"/>
    <property type="evidence" value="ECO:0007669"/>
    <property type="project" value="GOC"/>
</dbReference>
<dbReference type="GO" id="GO:0005794">
    <property type="term" value="C:Golgi apparatus"/>
    <property type="evidence" value="ECO:0007669"/>
    <property type="project" value="UniProtKB-SubCell"/>
</dbReference>
<dbReference type="GO" id="GO:0016020">
    <property type="term" value="C:membrane"/>
    <property type="evidence" value="ECO:0007669"/>
    <property type="project" value="UniProtKB-KW"/>
</dbReference>
<dbReference type="GO" id="GO:0006895">
    <property type="term" value="P:Golgi to endosome transport"/>
    <property type="evidence" value="ECO:0007669"/>
    <property type="project" value="TreeGrafter"/>
</dbReference>
<dbReference type="GO" id="GO:0006896">
    <property type="term" value="P:Golgi to vacuole transport"/>
    <property type="evidence" value="ECO:0007669"/>
    <property type="project" value="TreeGrafter"/>
</dbReference>
<dbReference type="GO" id="GO:0006623">
    <property type="term" value="P:protein targeting to vacuole"/>
    <property type="evidence" value="ECO:0007669"/>
    <property type="project" value="TreeGrafter"/>
</dbReference>
<dbReference type="FunFam" id="3.30.60.270:FF:000005">
    <property type="entry name" value="Sortilin"/>
    <property type="match status" value="1"/>
</dbReference>
<dbReference type="Gene3D" id="3.30.60.270">
    <property type="match status" value="1"/>
</dbReference>
<dbReference type="Gene3D" id="2.130.10.10">
    <property type="entry name" value="YVTN repeat-like/Quinoprotein amine dehydrogenase"/>
    <property type="match status" value="2"/>
</dbReference>
<dbReference type="InterPro" id="IPR031777">
    <property type="entry name" value="Sortilin_C"/>
</dbReference>
<dbReference type="InterPro" id="IPR031778">
    <property type="entry name" value="Sortilin_N"/>
</dbReference>
<dbReference type="InterPro" id="IPR006581">
    <property type="entry name" value="VPS10"/>
</dbReference>
<dbReference type="InterPro" id="IPR050310">
    <property type="entry name" value="VPS10-sortilin"/>
</dbReference>
<dbReference type="InterPro" id="IPR015943">
    <property type="entry name" value="WD40/YVTN_repeat-like_dom_sf"/>
</dbReference>
<dbReference type="PANTHER" id="PTHR12106">
    <property type="entry name" value="SORTILIN RELATED"/>
    <property type="match status" value="1"/>
</dbReference>
<dbReference type="PANTHER" id="PTHR12106:SF27">
    <property type="entry name" value="SORTILIN-RELATED RECEPTOR"/>
    <property type="match status" value="1"/>
</dbReference>
<dbReference type="Pfam" id="PF15902">
    <property type="entry name" value="Sortilin-Vps10"/>
    <property type="match status" value="2"/>
</dbReference>
<dbReference type="Pfam" id="PF15901">
    <property type="entry name" value="Sortilin_C"/>
    <property type="match status" value="2"/>
</dbReference>
<dbReference type="SMART" id="SM00602">
    <property type="entry name" value="VPS10"/>
    <property type="match status" value="2"/>
</dbReference>
<dbReference type="SUPFAM" id="SSF110296">
    <property type="entry name" value="Oligoxyloglucan reducing end-specific cellobiohydrolase"/>
    <property type="match status" value="2"/>
</dbReference>
<accession>Q6CNR4</accession>
<organism>
    <name type="scientific">Kluyveromyces lactis (strain ATCC 8585 / CBS 2359 / DSM 70799 / NBRC 1267 / NRRL Y-1140 / WM37)</name>
    <name type="common">Yeast</name>
    <name type="synonym">Candida sphaerica</name>
    <dbReference type="NCBI Taxonomy" id="284590"/>
    <lineage>
        <taxon>Eukaryota</taxon>
        <taxon>Fungi</taxon>
        <taxon>Dikarya</taxon>
        <taxon>Ascomycota</taxon>
        <taxon>Saccharomycotina</taxon>
        <taxon>Saccharomycetes</taxon>
        <taxon>Saccharomycetales</taxon>
        <taxon>Saccharomycetaceae</taxon>
        <taxon>Kluyveromyces</taxon>
    </lineage>
</organism>
<name>VPS10_KLULA</name>
<keyword id="KW-0325">Glycoprotein</keyword>
<keyword id="KW-0333">Golgi apparatus</keyword>
<keyword id="KW-0472">Membrane</keyword>
<keyword id="KW-0653">Protein transport</keyword>
<keyword id="KW-0675">Receptor</keyword>
<keyword id="KW-1185">Reference proteome</keyword>
<keyword id="KW-0677">Repeat</keyword>
<keyword id="KW-0732">Signal</keyword>
<keyword id="KW-0812">Transmembrane</keyword>
<keyword id="KW-1133">Transmembrane helix</keyword>
<keyword id="KW-0813">Transport</keyword>
<protein>
    <recommendedName>
        <fullName>Vacuolar protein sorting/targeting protein 10</fullName>
    </recommendedName>
    <alternativeName>
        <fullName>Carboxypeptidase Y receptor</fullName>
        <shortName>CPY receptor</shortName>
    </alternativeName>
    <alternativeName>
        <fullName>Sortilin VPS10</fullName>
    </alternativeName>
    <alternativeName>
        <fullName>Vacuolar carboxypeptidase sorting receptor VPS10</fullName>
    </alternativeName>
</protein>
<reference key="1">
    <citation type="journal article" date="2004" name="Nature">
        <title>Genome evolution in yeasts.</title>
        <authorList>
            <person name="Dujon B."/>
            <person name="Sherman D."/>
            <person name="Fischer G."/>
            <person name="Durrens P."/>
            <person name="Casaregola S."/>
            <person name="Lafontaine I."/>
            <person name="de Montigny J."/>
            <person name="Marck C."/>
            <person name="Neuveglise C."/>
            <person name="Talla E."/>
            <person name="Goffard N."/>
            <person name="Frangeul L."/>
            <person name="Aigle M."/>
            <person name="Anthouard V."/>
            <person name="Babour A."/>
            <person name="Barbe V."/>
            <person name="Barnay S."/>
            <person name="Blanchin S."/>
            <person name="Beckerich J.-M."/>
            <person name="Beyne E."/>
            <person name="Bleykasten C."/>
            <person name="Boisrame A."/>
            <person name="Boyer J."/>
            <person name="Cattolico L."/>
            <person name="Confanioleri F."/>
            <person name="de Daruvar A."/>
            <person name="Despons L."/>
            <person name="Fabre E."/>
            <person name="Fairhead C."/>
            <person name="Ferry-Dumazet H."/>
            <person name="Groppi A."/>
            <person name="Hantraye F."/>
            <person name="Hennequin C."/>
            <person name="Jauniaux N."/>
            <person name="Joyet P."/>
            <person name="Kachouri R."/>
            <person name="Kerrest A."/>
            <person name="Koszul R."/>
            <person name="Lemaire M."/>
            <person name="Lesur I."/>
            <person name="Ma L."/>
            <person name="Muller H."/>
            <person name="Nicaud J.-M."/>
            <person name="Nikolski M."/>
            <person name="Oztas S."/>
            <person name="Ozier-Kalogeropoulos O."/>
            <person name="Pellenz S."/>
            <person name="Potier S."/>
            <person name="Richard G.-F."/>
            <person name="Straub M.-L."/>
            <person name="Suleau A."/>
            <person name="Swennen D."/>
            <person name="Tekaia F."/>
            <person name="Wesolowski-Louvel M."/>
            <person name="Westhof E."/>
            <person name="Wirth B."/>
            <person name="Zeniou-Meyer M."/>
            <person name="Zivanovic Y."/>
            <person name="Bolotin-Fukuhara M."/>
            <person name="Thierry A."/>
            <person name="Bouchier C."/>
            <person name="Caudron B."/>
            <person name="Scarpelli C."/>
            <person name="Gaillardin C."/>
            <person name="Weissenbach J."/>
            <person name="Wincker P."/>
            <person name="Souciet J.-L."/>
        </authorList>
    </citation>
    <scope>NUCLEOTIDE SEQUENCE [LARGE SCALE GENOMIC DNA]</scope>
    <source>
        <strain>ATCC 8585 / CBS 2359 / DSM 70799 / NBRC 1267 / NRRL Y-1140 / WM37</strain>
    </source>
</reference>
<comment type="function">
    <text evidence="1">Functions as a sorting receptor in the Golgi compartment required for the intracellular sorting and delivery of soluble vacuolar proteins, like carboxypeptidase Y (CPY) and proteinase A. Executes multiple rounds of sorting by cycling between the late Golgi and a prevacuolar endosome-like compartment (By similarity).</text>
</comment>
<comment type="subcellular location">
    <subcellularLocation>
        <location evidence="1">Golgi apparatus</location>
        <location evidence="1">trans-Golgi network membrane</location>
        <topology evidence="1">Single-pass type I membrane protein</topology>
    </subcellularLocation>
    <subcellularLocation>
        <location evidence="1">Prevacuolar compartment membrane</location>
        <topology evidence="1">Single-pass type I membrane protein</topology>
    </subcellularLocation>
    <text evidence="1">Cycles between the Golgi apparatus and the prevacuolar compartment.</text>
</comment>
<comment type="similarity">
    <text evidence="4">Belongs to the VPS10-related sortilin family.</text>
</comment>